<reference key="1">
    <citation type="journal article" date="2002" name="Proc. Natl. Acad. Sci. U.S.A.">
        <title>Genome sequence and comparative microarray analysis of serotype M18 group A Streptococcus strains associated with acute rheumatic fever outbreaks.</title>
        <authorList>
            <person name="Smoot J.C."/>
            <person name="Barbian K.D."/>
            <person name="Van Gompel J.J."/>
            <person name="Smoot L.M."/>
            <person name="Chaussee M.S."/>
            <person name="Sylva G.L."/>
            <person name="Sturdevant D.E."/>
            <person name="Ricklefs S.M."/>
            <person name="Porcella S.F."/>
            <person name="Parkins L.D."/>
            <person name="Beres S.B."/>
            <person name="Campbell D.S."/>
            <person name="Smith T.M."/>
            <person name="Zhang Q."/>
            <person name="Kapur V."/>
            <person name="Daly J.A."/>
            <person name="Veasy L.G."/>
            <person name="Musser J.M."/>
        </authorList>
    </citation>
    <scope>NUCLEOTIDE SEQUENCE [LARGE SCALE GENOMIC DNA]</scope>
    <source>
        <strain>MGAS8232</strain>
    </source>
</reference>
<protein>
    <recommendedName>
        <fullName evidence="1">Large ribosomal subunit protein uL4</fullName>
    </recommendedName>
    <alternativeName>
        <fullName evidence="3">50S ribosomal protein L4</fullName>
    </alternativeName>
</protein>
<name>RL4_STRP8</name>
<gene>
    <name evidence="1" type="primary">rplD</name>
    <name type="ordered locus">spyM18_0051</name>
</gene>
<evidence type="ECO:0000255" key="1">
    <source>
        <dbReference type="HAMAP-Rule" id="MF_01328"/>
    </source>
</evidence>
<evidence type="ECO:0000256" key="2">
    <source>
        <dbReference type="SAM" id="MobiDB-lite"/>
    </source>
</evidence>
<evidence type="ECO:0000305" key="3"/>
<accession>P60831</accession>
<accession>Q9A1X3</accession>
<feature type="chain" id="PRO_0000129294" description="Large ribosomal subunit protein uL4">
    <location>
        <begin position="1"/>
        <end position="207"/>
    </location>
</feature>
<feature type="region of interest" description="Disordered" evidence="2">
    <location>
        <begin position="49"/>
        <end position="78"/>
    </location>
</feature>
<comment type="function">
    <text evidence="1">One of the primary rRNA binding proteins, this protein initially binds near the 5'-end of the 23S rRNA. It is important during the early stages of 50S assembly. It makes multiple contacts with different domains of the 23S rRNA in the assembled 50S subunit and ribosome.</text>
</comment>
<comment type="function">
    <text evidence="1">Forms part of the polypeptide exit tunnel.</text>
</comment>
<comment type="subunit">
    <text evidence="1">Part of the 50S ribosomal subunit.</text>
</comment>
<comment type="similarity">
    <text evidence="1">Belongs to the universal ribosomal protein uL4 family.</text>
</comment>
<keyword id="KW-0687">Ribonucleoprotein</keyword>
<keyword id="KW-0689">Ribosomal protein</keyword>
<keyword id="KW-0694">RNA-binding</keyword>
<keyword id="KW-0699">rRNA-binding</keyword>
<sequence length="207" mass="22125">MANVKLFDQTGKEVSSVELNDAIFGIEPNESVVFDVVISQRASLRQGTHAVKNRSAVSGGGRKPWRQKGTGRARQGSIRSPQWRGGGVVFGPTPRSYGYKLPQKVRRLALKSVYSAKVAEDKFVAVEGLSFAAPKTAEFAKVLSALSIDTKVLVLVEEGNEFAALSARNLPNVTVATAATASVLDIVNADKLLVTKEAISTIEEVLA</sequence>
<proteinExistence type="inferred from homology"/>
<dbReference type="EMBL" id="AE009949">
    <property type="protein sequence ID" value="AAL96877.1"/>
    <property type="molecule type" value="Genomic_DNA"/>
</dbReference>
<dbReference type="RefSeq" id="WP_002986657.1">
    <property type="nucleotide sequence ID" value="NC_003485.1"/>
</dbReference>
<dbReference type="SMR" id="P60831"/>
<dbReference type="GeneID" id="83689572"/>
<dbReference type="KEGG" id="spm:spyM18_0051"/>
<dbReference type="HOGENOM" id="CLU_041575_5_2_9"/>
<dbReference type="GO" id="GO:1990904">
    <property type="term" value="C:ribonucleoprotein complex"/>
    <property type="evidence" value="ECO:0007669"/>
    <property type="project" value="UniProtKB-KW"/>
</dbReference>
<dbReference type="GO" id="GO:0005840">
    <property type="term" value="C:ribosome"/>
    <property type="evidence" value="ECO:0007669"/>
    <property type="project" value="UniProtKB-KW"/>
</dbReference>
<dbReference type="GO" id="GO:0019843">
    <property type="term" value="F:rRNA binding"/>
    <property type="evidence" value="ECO:0007669"/>
    <property type="project" value="UniProtKB-UniRule"/>
</dbReference>
<dbReference type="GO" id="GO:0003735">
    <property type="term" value="F:structural constituent of ribosome"/>
    <property type="evidence" value="ECO:0007669"/>
    <property type="project" value="InterPro"/>
</dbReference>
<dbReference type="GO" id="GO:0006412">
    <property type="term" value="P:translation"/>
    <property type="evidence" value="ECO:0007669"/>
    <property type="project" value="UniProtKB-UniRule"/>
</dbReference>
<dbReference type="FunFam" id="3.40.1370.10:FF:000003">
    <property type="entry name" value="50S ribosomal protein L4"/>
    <property type="match status" value="1"/>
</dbReference>
<dbReference type="Gene3D" id="3.40.1370.10">
    <property type="match status" value="1"/>
</dbReference>
<dbReference type="HAMAP" id="MF_01328_B">
    <property type="entry name" value="Ribosomal_uL4_B"/>
    <property type="match status" value="1"/>
</dbReference>
<dbReference type="InterPro" id="IPR002136">
    <property type="entry name" value="Ribosomal_uL4"/>
</dbReference>
<dbReference type="InterPro" id="IPR013005">
    <property type="entry name" value="Ribosomal_uL4-like"/>
</dbReference>
<dbReference type="InterPro" id="IPR023574">
    <property type="entry name" value="Ribosomal_uL4_dom_sf"/>
</dbReference>
<dbReference type="NCBIfam" id="TIGR03953">
    <property type="entry name" value="rplD_bact"/>
    <property type="match status" value="1"/>
</dbReference>
<dbReference type="PANTHER" id="PTHR10746">
    <property type="entry name" value="50S RIBOSOMAL PROTEIN L4"/>
    <property type="match status" value="1"/>
</dbReference>
<dbReference type="PANTHER" id="PTHR10746:SF6">
    <property type="entry name" value="LARGE RIBOSOMAL SUBUNIT PROTEIN UL4M"/>
    <property type="match status" value="1"/>
</dbReference>
<dbReference type="Pfam" id="PF00573">
    <property type="entry name" value="Ribosomal_L4"/>
    <property type="match status" value="1"/>
</dbReference>
<dbReference type="SUPFAM" id="SSF52166">
    <property type="entry name" value="Ribosomal protein L4"/>
    <property type="match status" value="1"/>
</dbReference>
<organism>
    <name type="scientific">Streptococcus pyogenes serotype M18 (strain MGAS8232)</name>
    <dbReference type="NCBI Taxonomy" id="186103"/>
    <lineage>
        <taxon>Bacteria</taxon>
        <taxon>Bacillati</taxon>
        <taxon>Bacillota</taxon>
        <taxon>Bacilli</taxon>
        <taxon>Lactobacillales</taxon>
        <taxon>Streptococcaceae</taxon>
        <taxon>Streptococcus</taxon>
    </lineage>
</organism>